<comment type="function">
    <text evidence="1">Catalyzes the deamination of 5-methylthioadenosine and S-adenosyl-L-homocysteine into 5-methylthioinosine and S-inosyl-L-homocysteine, respectively. Is also able to deaminate adenosine.</text>
</comment>
<comment type="catalytic activity">
    <reaction evidence="1">
        <text>S-adenosyl-L-homocysteine + H2O + H(+) = S-inosyl-L-homocysteine + NH4(+)</text>
        <dbReference type="Rhea" id="RHEA:20716"/>
        <dbReference type="ChEBI" id="CHEBI:15377"/>
        <dbReference type="ChEBI" id="CHEBI:15378"/>
        <dbReference type="ChEBI" id="CHEBI:28938"/>
        <dbReference type="ChEBI" id="CHEBI:57856"/>
        <dbReference type="ChEBI" id="CHEBI:57985"/>
        <dbReference type="EC" id="3.5.4.28"/>
    </reaction>
</comment>
<comment type="catalytic activity">
    <reaction evidence="1">
        <text>S-methyl-5'-thioadenosine + H2O + H(+) = S-methyl-5'-thioinosine + NH4(+)</text>
        <dbReference type="Rhea" id="RHEA:25025"/>
        <dbReference type="ChEBI" id="CHEBI:15377"/>
        <dbReference type="ChEBI" id="CHEBI:15378"/>
        <dbReference type="ChEBI" id="CHEBI:17509"/>
        <dbReference type="ChEBI" id="CHEBI:28938"/>
        <dbReference type="ChEBI" id="CHEBI:48595"/>
        <dbReference type="EC" id="3.5.4.31"/>
    </reaction>
</comment>
<comment type="cofactor">
    <cofactor evidence="1">
        <name>Zn(2+)</name>
        <dbReference type="ChEBI" id="CHEBI:29105"/>
    </cofactor>
    <text evidence="1">Binds 1 zinc ion per subunit.</text>
</comment>
<comment type="similarity">
    <text evidence="1">Belongs to the metallo-dependent hydrolases superfamily. MTA/SAH deaminase family.</text>
</comment>
<organism>
    <name type="scientific">Shouchella clausii (strain KSM-K16)</name>
    <name type="common">Alkalihalobacillus clausii</name>
    <dbReference type="NCBI Taxonomy" id="66692"/>
    <lineage>
        <taxon>Bacteria</taxon>
        <taxon>Bacillati</taxon>
        <taxon>Bacillota</taxon>
        <taxon>Bacilli</taxon>
        <taxon>Bacillales</taxon>
        <taxon>Bacillaceae</taxon>
        <taxon>Shouchella</taxon>
    </lineage>
</organism>
<reference key="1">
    <citation type="submission" date="2003-10" db="EMBL/GenBank/DDBJ databases">
        <title>The complete genome sequence of the alkaliphilic Bacillus clausii KSM-K16.</title>
        <authorList>
            <person name="Takaki Y."/>
            <person name="Kageyama Y."/>
            <person name="Shimamura S."/>
            <person name="Suzuki H."/>
            <person name="Nishi S."/>
            <person name="Hatada Y."/>
            <person name="Kawai S."/>
            <person name="Ito S."/>
            <person name="Horikoshi K."/>
        </authorList>
    </citation>
    <scope>NUCLEOTIDE SEQUENCE [LARGE SCALE GENOMIC DNA]</scope>
    <source>
        <strain>KSM-K16</strain>
    </source>
</reference>
<evidence type="ECO:0000255" key="1">
    <source>
        <dbReference type="HAMAP-Rule" id="MF_01281"/>
    </source>
</evidence>
<dbReference type="EC" id="3.5.4.28" evidence="1"/>
<dbReference type="EC" id="3.5.4.31" evidence="1"/>
<dbReference type="EMBL" id="AP006627">
    <property type="protein sequence ID" value="BAD64597.1"/>
    <property type="molecule type" value="Genomic_DNA"/>
</dbReference>
<dbReference type="RefSeq" id="WP_011246905.1">
    <property type="nucleotide sequence ID" value="NC_006582.1"/>
</dbReference>
<dbReference type="SMR" id="Q5WGA8"/>
<dbReference type="STRING" id="66692.ABC2062"/>
<dbReference type="KEGG" id="bcl:ABC2062"/>
<dbReference type="eggNOG" id="COG0402">
    <property type="taxonomic scope" value="Bacteria"/>
</dbReference>
<dbReference type="HOGENOM" id="CLU_012358_2_0_9"/>
<dbReference type="OrthoDB" id="9807210at2"/>
<dbReference type="Proteomes" id="UP000001168">
    <property type="component" value="Chromosome"/>
</dbReference>
<dbReference type="GO" id="GO:0090614">
    <property type="term" value="F:5'-methylthioadenosine deaminase activity"/>
    <property type="evidence" value="ECO:0007669"/>
    <property type="project" value="UniProtKB-UniRule"/>
</dbReference>
<dbReference type="GO" id="GO:0046872">
    <property type="term" value="F:metal ion binding"/>
    <property type="evidence" value="ECO:0007669"/>
    <property type="project" value="UniProtKB-KW"/>
</dbReference>
<dbReference type="GO" id="GO:0050270">
    <property type="term" value="F:S-adenosylhomocysteine deaminase activity"/>
    <property type="evidence" value="ECO:0007669"/>
    <property type="project" value="UniProtKB-UniRule"/>
</dbReference>
<dbReference type="CDD" id="cd01298">
    <property type="entry name" value="ATZ_TRZ_like"/>
    <property type="match status" value="1"/>
</dbReference>
<dbReference type="FunFam" id="3.20.20.140:FF:000014">
    <property type="entry name" value="5-methylthioadenosine/S-adenosylhomocysteine deaminase"/>
    <property type="match status" value="1"/>
</dbReference>
<dbReference type="Gene3D" id="3.20.20.140">
    <property type="entry name" value="Metal-dependent hydrolases"/>
    <property type="match status" value="1"/>
</dbReference>
<dbReference type="Gene3D" id="2.30.40.10">
    <property type="entry name" value="Urease, subunit C, domain 1"/>
    <property type="match status" value="1"/>
</dbReference>
<dbReference type="HAMAP" id="MF_01281">
    <property type="entry name" value="MTA_SAH_deamin"/>
    <property type="match status" value="1"/>
</dbReference>
<dbReference type="InterPro" id="IPR006680">
    <property type="entry name" value="Amidohydro-rel"/>
</dbReference>
<dbReference type="InterPro" id="IPR023512">
    <property type="entry name" value="Deaminase_MtaD/DadD"/>
</dbReference>
<dbReference type="InterPro" id="IPR011059">
    <property type="entry name" value="Metal-dep_hydrolase_composite"/>
</dbReference>
<dbReference type="InterPro" id="IPR032466">
    <property type="entry name" value="Metal_Hydrolase"/>
</dbReference>
<dbReference type="InterPro" id="IPR050287">
    <property type="entry name" value="MTA/SAH_deaminase"/>
</dbReference>
<dbReference type="PANTHER" id="PTHR43794:SF11">
    <property type="entry name" value="AMIDOHYDROLASE-RELATED DOMAIN-CONTAINING PROTEIN"/>
    <property type="match status" value="1"/>
</dbReference>
<dbReference type="PANTHER" id="PTHR43794">
    <property type="entry name" value="AMINOHYDROLASE SSNA-RELATED"/>
    <property type="match status" value="1"/>
</dbReference>
<dbReference type="Pfam" id="PF01979">
    <property type="entry name" value="Amidohydro_1"/>
    <property type="match status" value="1"/>
</dbReference>
<dbReference type="SUPFAM" id="SSF51338">
    <property type="entry name" value="Composite domain of metallo-dependent hydrolases"/>
    <property type="match status" value="1"/>
</dbReference>
<dbReference type="SUPFAM" id="SSF51556">
    <property type="entry name" value="Metallo-dependent hydrolases"/>
    <property type="match status" value="1"/>
</dbReference>
<accession>Q5WGA8</accession>
<sequence length="434" mass="48337">MKTIIKNAKVITMNEARTIHEHGYVVIEDGVFTAIEHGEPAEEAAKGANVVNADKKWLMPGLINTHGHTGMSLFRGVSDDLPLSKWLAEHIWPLEQKLDQKAVEAARLLSMVEMIESGTTTFLEMYHLHLDDFAAAVEEAGMRATLMRSVIGLCSKEEQEEKLAESLGFARRWHKQANGRIQTMLAPHAPYTCPPDYIERIVEAARQEGLPVHMHLAETRKEIHDYMDEYGMHPVELLQERDLLSGTEWLFAHGVHMHEQHYELLGAHQAAVSHNPKSNLKLGSGIAQVASMQKHGIVVSLGTDSVASNNALDLFEEMRTAVLLQRGINEQADIVTTWEGLNMATSNGAKALRFANLGTIEVGQQADFIMLNPEQAHLHPSSQAVSHLVFAAKGSDVTDVYVQGAPLMKDKQLLTLDKERILKEANEQLRRLQQ</sequence>
<protein>
    <recommendedName>
        <fullName evidence="1">5-methylthioadenosine/S-adenosylhomocysteine deaminase</fullName>
        <shortName evidence="1">MTA/SAH deaminase</shortName>
        <ecNumber evidence="1">3.5.4.28</ecNumber>
        <ecNumber evidence="1">3.5.4.31</ecNumber>
    </recommendedName>
</protein>
<proteinExistence type="inferred from homology"/>
<name>MTAD_SHOC1</name>
<keyword id="KW-0378">Hydrolase</keyword>
<keyword id="KW-0479">Metal-binding</keyword>
<keyword id="KW-1185">Reference proteome</keyword>
<keyword id="KW-0862">Zinc</keyword>
<gene>
    <name evidence="1" type="primary">mtaD</name>
    <name type="ordered locus">ABC2062</name>
</gene>
<feature type="chain" id="PRO_0000312445" description="5-methylthioadenosine/S-adenosylhomocysteine deaminase">
    <location>
        <begin position="1"/>
        <end position="434"/>
    </location>
</feature>
<feature type="binding site" evidence="1">
    <location>
        <position position="66"/>
    </location>
    <ligand>
        <name>Zn(2+)</name>
        <dbReference type="ChEBI" id="CHEBI:29105"/>
    </ligand>
</feature>
<feature type="binding site" evidence="1">
    <location>
        <position position="68"/>
    </location>
    <ligand>
        <name>Zn(2+)</name>
        <dbReference type="ChEBI" id="CHEBI:29105"/>
    </ligand>
</feature>
<feature type="binding site" evidence="1">
    <location>
        <position position="95"/>
    </location>
    <ligand>
        <name>substrate</name>
    </ligand>
</feature>
<feature type="binding site" evidence="1">
    <location>
        <position position="148"/>
    </location>
    <ligand>
        <name>substrate</name>
    </ligand>
</feature>
<feature type="binding site" evidence="1">
    <location>
        <position position="188"/>
    </location>
    <ligand>
        <name>substrate</name>
    </ligand>
</feature>
<feature type="binding site" evidence="1">
    <location>
        <position position="215"/>
    </location>
    <ligand>
        <name>Zn(2+)</name>
        <dbReference type="ChEBI" id="CHEBI:29105"/>
    </ligand>
</feature>
<feature type="binding site" evidence="1">
    <location>
        <position position="218"/>
    </location>
    <ligand>
        <name>substrate</name>
    </ligand>
</feature>
<feature type="binding site" evidence="1">
    <location>
        <position position="304"/>
    </location>
    <ligand>
        <name>substrate</name>
    </ligand>
</feature>
<feature type="binding site" evidence="1">
    <location>
        <position position="304"/>
    </location>
    <ligand>
        <name>Zn(2+)</name>
        <dbReference type="ChEBI" id="CHEBI:29105"/>
    </ligand>
</feature>